<comment type="function">
    <text evidence="1 5">Pore-forming protein that forms cations-selective hydrophilic pores of around 1 nm and causes cardiac stimulation and cytolysis. Pore formation is a multi-step process that involves specific recognition of membrane sphingomyelin (but neither cholesterol nor phosphatidylcholine) using aromatic rich region and adjacent phosphocholine (POC) binding site, firm binding to the membrane (mainly driven by hydrophobic interactions) accompanied by the transfer of the N-terminal region to the lipid-water interface and finally pore formation after oligomerization of monomers (By similarity). Exhibits both hemolytic and lethal activities. Gangliosides potently inhibits the hemolytic activity.</text>
</comment>
<comment type="subunit">
    <text evidence="2">Octamer or nonamer in membranes. Monomer in the soluble state.</text>
</comment>
<comment type="subcellular location">
    <subcellularLocation>
        <location evidence="2">Secreted</location>
    </subcellularLocation>
    <subcellularLocation>
        <location evidence="3">Nematocyst</location>
    </subcellularLocation>
    <subcellularLocation>
        <location evidence="2">Target cell membrane</location>
    </subcellularLocation>
    <text evidence="2">Forms an alpha-helical membrane channel in the prey.</text>
</comment>
<comment type="tissue specificity">
    <text>Salivary gland.</text>
</comment>
<comment type="domain">
    <text evidence="4">Composed of a long N-terminal alpha-helix and a core region rich in beta-sheet structures. Before the pore formation, the alpha-helix binds the lipid membrane, partitions into the lipid-water interface and stabilizes the monomeric molecule on the membrane. Finally, it traverses the bilayer, thus forming the transmembrane pore.</text>
</comment>
<comment type="mass spectrometry" mass="24135.0" error="19.0" method="Electrospray" evidence="6"/>
<comment type="miscellaneous">
    <text>Is devoid of the RGD motif, but contains two Cys residues.</text>
</comment>
<comment type="similarity">
    <text evidence="7">Belongs to the actinoporin family. Sea anemone subfamily.</text>
</comment>
<name>ACTP2_MONPT</name>
<protein>
    <recommendedName>
        <fullName>Echotoxin-2</fullName>
        <shortName>Echt 2</shortName>
    </recommendedName>
</protein>
<sequence length="275" mass="30112">MKRNILALVVVVALISQSRPAESAGGTIIATLSKIPLSTLASALNTALETGASVASAAAAATSSDYSVTCVIEVENWTKHLMKYPVVQIANSGGLLTVAKNVLPAEIQSFAMRKAWGANGVYGTVSWVLGQTNRRVVIMWSAPYNFDFYSNWLAVGMSRPGLAVPSSRSTWFDLMYYGNSNADISFVRGEYYHSVDPIYFKNSEWEIEGSMNNIHKARVRATVKPIKTMDLASSILTKLEALAGANGKRAIQQELARRAEEEKQRKRKALDEMLK</sequence>
<reference key="1">
    <citation type="journal article" date="2003" name="Toxicon">
        <title>Primary structure of echotoxin 2, an actinoporin-like hemolytic toxin from the salivary gland of the marine gastropod Monoplex echo.</title>
        <authorList>
            <person name="Kawashima Y."/>
            <person name="Nagai H."/>
            <person name="Ishida M."/>
            <person name="Nagashima Y."/>
            <person name="Shiomi K."/>
        </authorList>
    </citation>
    <scope>NUCLEOTIDE SEQUENCE [MRNA]</scope>
    <scope>PROTEIN SEQUENCE OF 24-33; 84-100; 101-114; 136-168 AND 169-189</scope>
    <scope>MASS SPECTROMETRY</scope>
    <source>
        <tissue>Salivary gland</tissue>
    </source>
</reference>
<reference key="2">
    <citation type="submission" date="2009-09" db="EMBL/GenBank/DDBJ databases">
        <authorList>
            <person name="Kawashima Y."/>
            <person name="Nagai H."/>
            <person name="Ishida M."/>
            <person name="Nagashima Y."/>
            <person name="Shiomi K."/>
        </authorList>
    </citation>
    <scope>SEQUENCE REVISION TO 187-207</scope>
</reference>
<reference key="3">
    <citation type="journal article" date="2002" name="Toxicon">
        <title>Properties of proteinaceous toxins in the salivary gland of the marine gastropod (Monoplex echo).</title>
        <authorList>
            <person name="Shiomi K."/>
            <person name="Kawashima Y."/>
            <person name="Mizukami M."/>
            <person name="Nagashima Y."/>
        </authorList>
    </citation>
    <scope>AMINO-ACID COMPOSITION</scope>
    <scope>FUNCTION</scope>
    <source>
        <tissue>Salivary gland</tissue>
    </source>
</reference>
<reference key="4">
    <citation type="journal article" date="2009" name="Toxicon">
        <title>Molecular mechanism of pore formation by actinoporins.</title>
        <authorList>
            <person name="Kristan K.C."/>
            <person name="Viero G."/>
            <person name="Dalla Serra M."/>
            <person name="Macek P."/>
            <person name="Anderluh G."/>
        </authorList>
    </citation>
    <scope>REVIEW</scope>
</reference>
<organism>
    <name type="scientific">Monoplex parthenopeus</name>
    <name type="common">Giant triton</name>
    <name type="synonym">Monoplex echo</name>
    <dbReference type="NCBI Taxonomy" id="230564"/>
    <lineage>
        <taxon>Eukaryota</taxon>
        <taxon>Metazoa</taxon>
        <taxon>Spiralia</taxon>
        <taxon>Lophotrochozoa</taxon>
        <taxon>Mollusca</taxon>
        <taxon>Gastropoda</taxon>
        <taxon>Caenogastropoda</taxon>
        <taxon>Littorinimorpha</taxon>
        <taxon>Tonnoidea</taxon>
        <taxon>Ranellidae</taxon>
        <taxon>Monoplex</taxon>
    </lineage>
</organism>
<accession>Q76CA2</accession>
<dbReference type="EMBL" id="AB110013">
    <property type="protein sequence ID" value="BAD01578.2"/>
    <property type="molecule type" value="mRNA"/>
</dbReference>
<dbReference type="SMR" id="Q76CA2"/>
<dbReference type="TCDB" id="1.C.38.1.5">
    <property type="family name" value="the pore-forming equinatoxin (equinatoxin) family"/>
</dbReference>
<dbReference type="GO" id="GO:0005576">
    <property type="term" value="C:extracellular region"/>
    <property type="evidence" value="ECO:0007669"/>
    <property type="project" value="UniProtKB-SubCell"/>
</dbReference>
<dbReference type="GO" id="GO:0016020">
    <property type="term" value="C:membrane"/>
    <property type="evidence" value="ECO:0007669"/>
    <property type="project" value="UniProtKB-KW"/>
</dbReference>
<dbReference type="GO" id="GO:0042151">
    <property type="term" value="C:nematocyst"/>
    <property type="evidence" value="ECO:0007669"/>
    <property type="project" value="UniProtKB-SubCell"/>
</dbReference>
<dbReference type="GO" id="GO:0044218">
    <property type="term" value="C:other organism cell membrane"/>
    <property type="evidence" value="ECO:0007669"/>
    <property type="project" value="UniProtKB-KW"/>
</dbReference>
<dbReference type="GO" id="GO:0090729">
    <property type="term" value="F:toxin activity"/>
    <property type="evidence" value="ECO:0007669"/>
    <property type="project" value="UniProtKB-KW"/>
</dbReference>
<dbReference type="GO" id="GO:0031640">
    <property type="term" value="P:killing of cells of another organism"/>
    <property type="evidence" value="ECO:0007669"/>
    <property type="project" value="UniProtKB-KW"/>
</dbReference>
<dbReference type="GO" id="GO:0006811">
    <property type="term" value="P:monoatomic ion transport"/>
    <property type="evidence" value="ECO:0007669"/>
    <property type="project" value="UniProtKB-KW"/>
</dbReference>
<dbReference type="Gene3D" id="2.60.270.20">
    <property type="entry name" value="Cytolysin/lectin"/>
    <property type="match status" value="1"/>
</dbReference>
<dbReference type="InterPro" id="IPR050677">
    <property type="entry name" value="Actinoporin_PFT"/>
</dbReference>
<dbReference type="InterPro" id="IPR015926">
    <property type="entry name" value="Cytolysin/lectin"/>
</dbReference>
<dbReference type="PANTHER" id="PTHR40388">
    <property type="entry name" value="BRYOPORIN"/>
    <property type="match status" value="1"/>
</dbReference>
<dbReference type="PANTHER" id="PTHR40388:SF1">
    <property type="entry name" value="BRYOPORIN"/>
    <property type="match status" value="1"/>
</dbReference>
<dbReference type="SUPFAM" id="SSF63724">
    <property type="entry name" value="Cytolysin/lectin"/>
    <property type="match status" value="1"/>
</dbReference>
<feature type="signal peptide" evidence="6">
    <location>
        <begin position="1"/>
        <end position="23"/>
    </location>
</feature>
<feature type="chain" id="PRO_0000239200" description="Echotoxin-2">
    <location>
        <begin position="24"/>
        <end position="248"/>
    </location>
</feature>
<feature type="propeptide" id="PRO_0000239201">
    <location>
        <begin position="249"/>
        <end position="275"/>
    </location>
</feature>
<feature type="region of interest" description="Plays an important role in the hemolytic activity" evidence="1">
    <location>
        <begin position="23"/>
        <end position="32"/>
    </location>
</feature>
<feature type="region of interest" description="N-terminal region" evidence="4">
    <location>
        <begin position="49"/>
        <end position="67"/>
    </location>
</feature>
<feature type="region of interest" description="Trp-rich region, which is important for the binding to lipid membrane" evidence="4">
    <location>
        <begin position="141"/>
        <end position="156"/>
    </location>
</feature>
<feature type="binding site" evidence="3">
    <location>
        <position position="123"/>
    </location>
    <ligand>
        <name>phosphocholine</name>
        <dbReference type="ChEBI" id="CHEBI:295975"/>
    </ligand>
</feature>
<feature type="binding site" evidence="3">
    <location>
        <position position="141"/>
    </location>
    <ligand>
        <name>phosphocholine</name>
        <dbReference type="ChEBI" id="CHEBI:295975"/>
    </ligand>
</feature>
<feature type="binding site" evidence="3">
    <location>
        <position position="143"/>
    </location>
    <ligand>
        <name>phosphocholine</name>
        <dbReference type="ChEBI" id="CHEBI:295975"/>
    </ligand>
</feature>
<feature type="binding site" evidence="3">
    <location>
        <position position="176"/>
    </location>
    <ligand>
        <name>phosphocholine</name>
        <dbReference type="ChEBI" id="CHEBI:295975"/>
    </ligand>
</feature>
<feature type="binding site" evidence="3">
    <location>
        <position position="177"/>
    </location>
    <ligand>
        <name>phosphocholine</name>
        <dbReference type="ChEBI" id="CHEBI:295975"/>
    </ligand>
</feature>
<feature type="site" description="Important in the initial contact with the lipid membrane" evidence="1">
    <location>
        <position position="149"/>
    </location>
</feature>
<evidence type="ECO:0000250" key="1"/>
<evidence type="ECO:0000250" key="2">
    <source>
        <dbReference type="UniProtKB" id="B9W5G6"/>
    </source>
</evidence>
<evidence type="ECO:0000250" key="3">
    <source>
        <dbReference type="UniProtKB" id="P07845"/>
    </source>
</evidence>
<evidence type="ECO:0000250" key="4">
    <source>
        <dbReference type="UniProtKB" id="P61914"/>
    </source>
</evidence>
<evidence type="ECO:0000269" key="5">
    <source>
    </source>
</evidence>
<evidence type="ECO:0000269" key="6">
    <source>
    </source>
</evidence>
<evidence type="ECO:0000305" key="7"/>
<proteinExistence type="evidence at protein level"/>
<keyword id="KW-0204">Cytolysis</keyword>
<keyword id="KW-0903">Direct protein sequencing</keyword>
<keyword id="KW-0406">Ion transport</keyword>
<keyword id="KW-0472">Membrane</keyword>
<keyword id="KW-0166">Nematocyst</keyword>
<keyword id="KW-0964">Secreted</keyword>
<keyword id="KW-0732">Signal</keyword>
<keyword id="KW-1052">Target cell membrane</keyword>
<keyword id="KW-1053">Target membrane</keyword>
<keyword id="KW-0800">Toxin</keyword>
<keyword id="KW-0812">Transmembrane</keyword>
<keyword id="KW-0813">Transport</keyword>